<dbReference type="EMBL" id="U18344">
    <property type="protein sequence ID" value="AAB58347.2"/>
    <property type="molecule type" value="mRNA"/>
</dbReference>
<dbReference type="RefSeq" id="NP_001075813.1">
    <property type="nucleotide sequence ID" value="NM_001082344.1"/>
</dbReference>
<dbReference type="PDB" id="3V09">
    <property type="method" value="X-ray"/>
    <property type="resolution" value="2.27 A"/>
    <property type="chains" value="A=25-608"/>
</dbReference>
<dbReference type="PDB" id="6OCK">
    <property type="method" value="X-ray"/>
    <property type="resolution" value="1.90 A"/>
    <property type="chains" value="A=25-608"/>
</dbReference>
<dbReference type="PDB" id="6OCL">
    <property type="method" value="X-ray"/>
    <property type="resolution" value="2.35 A"/>
    <property type="chains" value="A=25-608"/>
</dbReference>
<dbReference type="PDB" id="8BSG">
    <property type="method" value="X-ray"/>
    <property type="resolution" value="1.89 A"/>
    <property type="chains" value="A=25-608"/>
</dbReference>
<dbReference type="PDBsum" id="3V09"/>
<dbReference type="PDBsum" id="6OCK"/>
<dbReference type="PDBsum" id="6OCL"/>
<dbReference type="PDBsum" id="8BSG"/>
<dbReference type="SMR" id="P49065"/>
<dbReference type="FunCoup" id="P49065">
    <property type="interactions" value="88"/>
</dbReference>
<dbReference type="STRING" id="9986.ENSOCUP00000014006"/>
<dbReference type="BindingDB" id="P49065"/>
<dbReference type="ChEMBL" id="CHEMBL6104"/>
<dbReference type="Allergome" id="759">
    <property type="allergen name" value="Ory c 6"/>
</dbReference>
<dbReference type="PaxDb" id="9986-ENSOCUP00000014006"/>
<dbReference type="GeneID" id="100009195"/>
<dbReference type="KEGG" id="ocu:100009195"/>
<dbReference type="CTD" id="213"/>
<dbReference type="eggNOG" id="ENOG502R7EA">
    <property type="taxonomic scope" value="Eukaryota"/>
</dbReference>
<dbReference type="InParanoid" id="P49065"/>
<dbReference type="OrthoDB" id="9875082at2759"/>
<dbReference type="EvolutionaryTrace" id="P49065"/>
<dbReference type="PRO" id="PR:P49065"/>
<dbReference type="Proteomes" id="UP000001811">
    <property type="component" value="Unplaced"/>
</dbReference>
<dbReference type="GO" id="GO:0072562">
    <property type="term" value="C:blood microparticle"/>
    <property type="evidence" value="ECO:0007669"/>
    <property type="project" value="TreeGrafter"/>
</dbReference>
<dbReference type="GO" id="GO:0005737">
    <property type="term" value="C:cytoplasm"/>
    <property type="evidence" value="ECO:0007669"/>
    <property type="project" value="TreeGrafter"/>
</dbReference>
<dbReference type="GO" id="GO:0032991">
    <property type="term" value="C:protein-containing complex"/>
    <property type="evidence" value="ECO:0000250"/>
    <property type="project" value="UniProtKB"/>
</dbReference>
<dbReference type="GO" id="GO:0003677">
    <property type="term" value="F:DNA binding"/>
    <property type="evidence" value="ECO:0000250"/>
    <property type="project" value="UniProtKB"/>
</dbReference>
<dbReference type="GO" id="GO:1903981">
    <property type="term" value="F:enterobactin binding"/>
    <property type="evidence" value="ECO:0000250"/>
    <property type="project" value="UniProtKB"/>
</dbReference>
<dbReference type="GO" id="GO:0005504">
    <property type="term" value="F:fatty acid binding"/>
    <property type="evidence" value="ECO:0000250"/>
    <property type="project" value="UniProtKB"/>
</dbReference>
<dbReference type="GO" id="GO:0046872">
    <property type="term" value="F:metal ion binding"/>
    <property type="evidence" value="ECO:0007669"/>
    <property type="project" value="UniProtKB-KW"/>
</dbReference>
<dbReference type="GO" id="GO:0030170">
    <property type="term" value="F:pyridoxal phosphate binding"/>
    <property type="evidence" value="ECO:0000250"/>
    <property type="project" value="UniProtKB"/>
</dbReference>
<dbReference type="GO" id="GO:0015643">
    <property type="term" value="F:toxic substance binding"/>
    <property type="evidence" value="ECO:0000250"/>
    <property type="project" value="UniProtKB"/>
</dbReference>
<dbReference type="GO" id="GO:0072732">
    <property type="term" value="P:cellular response to calcium ion starvation"/>
    <property type="evidence" value="ECO:0000250"/>
    <property type="project" value="UniProtKB"/>
</dbReference>
<dbReference type="GO" id="GO:0009267">
    <property type="term" value="P:cellular response to starvation"/>
    <property type="evidence" value="ECO:0000250"/>
    <property type="project" value="UniProtKB"/>
</dbReference>
<dbReference type="GO" id="GO:0051902">
    <property type="term" value="P:negative regulation of mitochondrial depolarization"/>
    <property type="evidence" value="ECO:0000250"/>
    <property type="project" value="UniProtKB"/>
</dbReference>
<dbReference type="CDD" id="cd00015">
    <property type="entry name" value="ALBUMIN"/>
    <property type="match status" value="3"/>
</dbReference>
<dbReference type="FunFam" id="1.10.246.10:FF:000001">
    <property type="entry name" value="Serum albumin"/>
    <property type="match status" value="2"/>
</dbReference>
<dbReference type="FunFam" id="1.10.246.10:FF:000002">
    <property type="entry name" value="Serum albumin"/>
    <property type="match status" value="2"/>
</dbReference>
<dbReference type="FunFam" id="1.10.246.10:FF:000003">
    <property type="entry name" value="Serum albumin"/>
    <property type="match status" value="1"/>
</dbReference>
<dbReference type="Gene3D" id="1.10.246.10">
    <property type="match status" value="6"/>
</dbReference>
<dbReference type="InterPro" id="IPR000264">
    <property type="entry name" value="ALB/AFP/VDB"/>
</dbReference>
<dbReference type="InterPro" id="IPR020858">
    <property type="entry name" value="Serum_albumin-like"/>
</dbReference>
<dbReference type="InterPro" id="IPR021177">
    <property type="entry name" value="Serum_albumin/AFP/Afamin"/>
</dbReference>
<dbReference type="InterPro" id="IPR020857">
    <property type="entry name" value="Serum_albumin_CS"/>
</dbReference>
<dbReference type="InterPro" id="IPR014760">
    <property type="entry name" value="Serum_albumin_N"/>
</dbReference>
<dbReference type="PANTHER" id="PTHR11385:SF15">
    <property type="entry name" value="ALBUMIN"/>
    <property type="match status" value="1"/>
</dbReference>
<dbReference type="PANTHER" id="PTHR11385">
    <property type="entry name" value="SERUM ALBUMIN-RELATED"/>
    <property type="match status" value="1"/>
</dbReference>
<dbReference type="Pfam" id="PF00273">
    <property type="entry name" value="Serum_albumin"/>
    <property type="match status" value="3"/>
</dbReference>
<dbReference type="PIRSF" id="PIRSF002520">
    <property type="entry name" value="Serum_albumin_subgroup"/>
    <property type="match status" value="1"/>
</dbReference>
<dbReference type="PRINTS" id="PR00803">
    <property type="entry name" value="AFETOPROTEIN"/>
</dbReference>
<dbReference type="PRINTS" id="PR00802">
    <property type="entry name" value="SERUMALBUMIN"/>
</dbReference>
<dbReference type="SMART" id="SM00103">
    <property type="entry name" value="ALBUMIN"/>
    <property type="match status" value="3"/>
</dbReference>
<dbReference type="SUPFAM" id="SSF48552">
    <property type="entry name" value="Serum albumin-like"/>
    <property type="match status" value="3"/>
</dbReference>
<dbReference type="PROSITE" id="PS00212">
    <property type="entry name" value="ALBUMIN_1"/>
    <property type="match status" value="3"/>
</dbReference>
<dbReference type="PROSITE" id="PS51438">
    <property type="entry name" value="ALBUMIN_2"/>
    <property type="match status" value="3"/>
</dbReference>
<proteinExistence type="evidence at protein level"/>
<sequence length="608" mass="68910">MKWVTFISLLFLFSSAYSRGVFRREAHKSEIAHRFNDVGEEHFIGLVLITFSQYLQKCPYEEHAKLVKEVTDLAKACVADESAANCDKSLHDIFGDKICALPSLRDTYGDVADCCEKKEPERNECFLHHKDDKPDLPPFARPEADVLCKAFHDDEKAFFGHYLYEVARRHPYFYAPELLYYAQKYKAILTECCEAADKGACLTPKLDALEGKSLISAAQERLRCASIQKFGDRAYKAWALVRLSQRFPKADFTDISKIVTDLTKVHKECCHGDLLECADDRADLAKYMCEHQETISSHLKECCDKPILEKAHCIYGLHNDETPAGLPAVAEEFVEDKDVCKNYEEAKDLFLGKFLYEYSRRHPDYSVVLLLRLGKAYEATLKKCCATDDPHACYAKVLDEFQPLVDEPKNLVKQNCELYEQLGDYNFQNALLVRYTKKVPQVSTPTLVEISRSLGKVGSKCCKHPEAERLPCVEDYLSVVLNRLCVLHEKTPVSEKVTKCCSESLVDRRPCFSALGPDETYVPKEFNAETFTFHADICTLPETERKIKKQTALVELVKHKPHATNDQLKTVVGEFTALLDKCCSAEDKEACFAVEGPKLVESSKATLG</sequence>
<comment type="function">
    <text evidence="1 2">Binds water, Ca(2+), Na(+), K(+), fatty acids, hormones, bilirubin and drugs. Its main function is the regulation of the colloidal osmotic pressure of blood. Major zinc transporter in plasma, typically binds about 80% of all plasma zinc (By similarity). Major calcium and magnesium transporter in plasma, binds approximately 45% of circulating calcium and magnesium in plasma (By similarity). Potentially has more than two calcium-binding sites and might additionally bind calcium in a non-specific manner (By similarity). The shared binding site between zinc and calcium at residue Asp-273 suggests a crosstalk between zinc and calcium transport in the blood (By similarity). The rank order of affinity is zinc &gt; calcium &gt; magnesium (By similarity). Binds to the bacterial siderophore enterobactin and inhibits enterobactin-mediated iron uptake of E.coli from ferric transferrin, and may thereby limit the utilization of iron and growth of enteric bacteria such as E.coli (By similarity). Does not prevent iron uptake by the bacterial siderophore aerobactin (By similarity).</text>
</comment>
<comment type="subunit">
    <text evidence="1 4">Interacts with FCGRT; this interaction regulates ALB homeostasis (By similarity). Interacts with TASOR (By similarity). In plasma, occurs in a covalently-linked complex with chromophore-bound alpha-1-microglobulin; this interaction does not prevent fatty acid binding to ALB.</text>
</comment>
<comment type="subcellular location">
    <subcellularLocation>
        <location>Secreted</location>
    </subcellularLocation>
</comment>
<comment type="tissue specificity">
    <text>Plasma.</text>
</comment>
<comment type="PTM">
    <text evidence="1">Phosphorylated by FAM20C in the extracellular medium.</text>
</comment>
<comment type="similarity">
    <text evidence="6">Belongs to the ALB/AFP/VDB family.</text>
</comment>
<keyword id="KW-0002">3D-structure</keyword>
<keyword id="KW-0106">Calcium</keyword>
<keyword id="KW-0165">Cleavage on pair of basic residues</keyword>
<keyword id="KW-0186">Copper</keyword>
<keyword id="KW-1015">Disulfide bond</keyword>
<keyword id="KW-0446">Lipid-binding</keyword>
<keyword id="KW-0479">Metal-binding</keyword>
<keyword id="KW-0488">Methylation</keyword>
<keyword id="KW-0597">Phosphoprotein</keyword>
<keyword id="KW-1185">Reference proteome</keyword>
<keyword id="KW-0677">Repeat</keyword>
<keyword id="KW-0964">Secreted</keyword>
<keyword id="KW-0732">Signal</keyword>
<keyword id="KW-0862">Zinc</keyword>
<protein>
    <recommendedName>
        <fullName>Albumin</fullName>
    </recommendedName>
</protein>
<reference key="1">
    <citation type="journal article" date="1997" name="Blood">
        <title>Potent antithrombin activity and delayed clearance from the circulation characterize recombinant hirudin genetically fused to albumin.</title>
        <authorList>
            <person name="Syed S."/>
            <person name="Schuyler P.D."/>
            <person name="Kulczycky M."/>
            <person name="Sheffield W.P."/>
        </authorList>
    </citation>
    <scope>NUCLEOTIDE SEQUENCE [MRNA]</scope>
    <source>
        <strain>New Zealand white</strain>
        <tissue>Liver</tissue>
    </source>
</reference>
<reference key="2">
    <citation type="submission" date="2003-04" db="EMBL/GenBank/DDBJ databases">
        <authorList>
            <person name="Sheffield W.P."/>
        </authorList>
    </citation>
    <scope>SEQUENCE REVISION TO 322-323 AND 506-507</scope>
</reference>
<reference evidence="8" key="3">
    <citation type="journal article" date="2012" name="Mol. Immunol.">
        <title>Structural and immunologic characterization of bovine, horse, and rabbit serum albumins.</title>
        <authorList>
            <person name="Majorek K.A."/>
            <person name="Porebski P.J."/>
            <person name="Dayal A."/>
            <person name="Zimmerman M.D."/>
            <person name="Jablonska K."/>
            <person name="Stewart A.J."/>
            <person name="Chruszcz M."/>
            <person name="Minor W."/>
        </authorList>
    </citation>
    <scope>X-RAY CRYSTALLOGRAPHY (2.27 ANGSTROMS) OF 25-608</scope>
    <scope>DISULFIDE BONDS</scope>
</reference>
<accession>P49065</accession>
<feature type="signal peptide" evidence="5">
    <location>
        <begin position="1"/>
        <end position="18"/>
    </location>
</feature>
<feature type="propeptide" id="PRO_0000001077" evidence="3">
    <location>
        <begin position="19"/>
        <end position="24"/>
    </location>
</feature>
<feature type="chain" id="PRO_0000001078" description="Albumin">
    <location>
        <begin position="25"/>
        <end position="608"/>
    </location>
</feature>
<feature type="domain" description="Albumin 1" evidence="6">
    <location>
        <begin position="19"/>
        <end position="210"/>
    </location>
</feature>
<feature type="domain" description="Albumin 2" evidence="6">
    <location>
        <begin position="211"/>
        <end position="403"/>
    </location>
</feature>
<feature type="domain" description="Albumin 3" evidence="6">
    <location>
        <begin position="404"/>
        <end position="601"/>
    </location>
</feature>
<feature type="binding site" evidence="3">
    <location>
        <position position="27"/>
    </location>
    <ligand>
        <name>Cu cation</name>
        <dbReference type="ChEBI" id="CHEBI:23378"/>
    </ligand>
</feature>
<feature type="binding site" evidence="2">
    <location>
        <position position="30"/>
    </location>
    <ligand>
        <name>Ca(2+)</name>
        <dbReference type="ChEBI" id="CHEBI:29108"/>
        <label>1</label>
    </ligand>
</feature>
<feature type="binding site" evidence="2">
    <location>
        <position position="37"/>
    </location>
    <ligand>
        <name>Ca(2+)</name>
        <dbReference type="ChEBI" id="CHEBI:29108"/>
        <label>2</label>
    </ligand>
</feature>
<feature type="binding site" evidence="1">
    <location>
        <position position="91"/>
    </location>
    <ligand>
        <name>Zn(2+)</name>
        <dbReference type="ChEBI" id="CHEBI:29105"/>
    </ligand>
</feature>
<feature type="binding site" evidence="2">
    <location>
        <position position="268"/>
    </location>
    <ligand>
        <name>Ca(2+)</name>
        <dbReference type="ChEBI" id="CHEBI:29108"/>
        <label>1</label>
    </ligand>
</feature>
<feature type="binding site" evidence="1">
    <location>
        <position position="271"/>
    </location>
    <ligand>
        <name>Zn(2+)</name>
        <dbReference type="ChEBI" id="CHEBI:29105"/>
    </ligand>
</feature>
<feature type="binding site" evidence="2">
    <location>
        <position position="273"/>
    </location>
    <ligand>
        <name>Ca(2+)</name>
        <dbReference type="ChEBI" id="CHEBI:29108"/>
        <label>1</label>
    </ligand>
</feature>
<feature type="binding site" evidence="1">
    <location>
        <position position="273"/>
    </location>
    <ligand>
        <name>Zn(2+)</name>
        <dbReference type="ChEBI" id="CHEBI:29105"/>
    </ligand>
</feature>
<feature type="binding site" evidence="2">
    <location>
        <position position="276"/>
    </location>
    <ligand>
        <name>Ca(2+)</name>
        <dbReference type="ChEBI" id="CHEBI:29108"/>
        <label>1</label>
    </ligand>
</feature>
<feature type="binding site" evidence="2">
    <location>
        <position position="279"/>
    </location>
    <ligand>
        <name>Ca(2+)</name>
        <dbReference type="ChEBI" id="CHEBI:29108"/>
        <label>2</label>
    </ligand>
</feature>
<feature type="binding site" evidence="2">
    <location>
        <position position="283"/>
    </location>
    <ligand>
        <name>Ca(2+)</name>
        <dbReference type="ChEBI" id="CHEBI:29108"/>
        <label>2</label>
    </ligand>
</feature>
<feature type="modified residue" description="Phosphoserine" evidence="1">
    <location>
        <position position="29"/>
    </location>
</feature>
<feature type="modified residue" description="Phosphoserine" evidence="1">
    <location>
        <position position="82"/>
    </location>
</feature>
<feature type="modified residue" description="Phosphoserine" evidence="1">
    <location>
        <position position="89"/>
    </location>
</feature>
<feature type="modified residue" description="Phosphothreonine" evidence="1">
    <location>
        <position position="107"/>
    </location>
</feature>
<feature type="modified residue" description="N6-succinyllysine" evidence="4">
    <location>
        <position position="229"/>
    </location>
</feature>
<feature type="modified residue" description="Phosphoserine" evidence="4">
    <location>
        <position position="297"/>
    </location>
</feature>
<feature type="modified residue" description="Phosphoserine" evidence="1">
    <location>
        <position position="443"/>
    </location>
</feature>
<feature type="modified residue" description="Phosphothreonine" evidence="1">
    <location>
        <position position="444"/>
    </location>
</feature>
<feature type="modified residue" description="Phosphothreonine" evidence="1">
    <location>
        <position position="446"/>
    </location>
</feature>
<feature type="modified residue" description="N6-succinyllysine" evidence="4">
    <location>
        <position position="460"/>
    </location>
</feature>
<feature type="modified residue" description="Phosphoserine" evidence="1">
    <location>
        <position position="513"/>
    </location>
</feature>
<feature type="modified residue" description="N6-methyllysine" evidence="1">
    <location>
        <position position="558"/>
    </location>
</feature>
<feature type="modified residue" description="Phosphothreonine" evidence="3">
    <location>
        <position position="570"/>
    </location>
</feature>
<feature type="modified residue" description="N6-succinyllysine" evidence="4">
    <location>
        <position position="588"/>
    </location>
</feature>
<feature type="disulfide bond" evidence="6 7 8">
    <location>
        <begin position="77"/>
        <end position="86"/>
    </location>
</feature>
<feature type="disulfide bond" evidence="6 7 8">
    <location>
        <begin position="99"/>
        <end position="115"/>
    </location>
</feature>
<feature type="disulfide bond" evidence="6 7 8">
    <location>
        <begin position="114"/>
        <end position="125"/>
    </location>
</feature>
<feature type="disulfide bond" evidence="6 7 8">
    <location>
        <begin position="148"/>
        <end position="193"/>
    </location>
</feature>
<feature type="disulfide bond" evidence="6 7 8">
    <location>
        <begin position="192"/>
        <end position="201"/>
    </location>
</feature>
<feature type="disulfide bond" evidence="6 7 8">
    <location>
        <begin position="224"/>
        <end position="270"/>
    </location>
</feature>
<feature type="disulfide bond" evidence="6 7 8">
    <location>
        <begin position="269"/>
        <end position="277"/>
    </location>
</feature>
<feature type="disulfide bond" evidence="6 7 8">
    <location>
        <begin position="289"/>
        <end position="303"/>
    </location>
</feature>
<feature type="disulfide bond" evidence="6 7 8">
    <location>
        <begin position="302"/>
        <end position="313"/>
    </location>
</feature>
<feature type="disulfide bond" evidence="6 7 8">
    <location>
        <begin position="340"/>
        <end position="385"/>
    </location>
</feature>
<feature type="disulfide bond" evidence="6 7 8">
    <location>
        <begin position="384"/>
        <end position="393"/>
    </location>
</feature>
<feature type="disulfide bond" evidence="6 7 8">
    <location>
        <begin position="416"/>
        <end position="462"/>
    </location>
</feature>
<feature type="disulfide bond" evidence="6 7 8">
    <location>
        <begin position="461"/>
        <end position="472"/>
    </location>
</feature>
<feature type="disulfide bond" evidence="6 7 8">
    <location>
        <begin position="485"/>
        <end position="501"/>
    </location>
</feature>
<feature type="disulfide bond" evidence="6 7 8">
    <location>
        <begin position="500"/>
        <end position="511"/>
    </location>
</feature>
<feature type="disulfide bond" evidence="6 7 8">
    <location>
        <begin position="538"/>
        <end position="583"/>
    </location>
</feature>
<feature type="disulfide bond" evidence="6 7 8">
    <location>
        <begin position="582"/>
        <end position="591"/>
    </location>
</feature>
<feature type="helix" evidence="12">
    <location>
        <begin position="30"/>
        <end position="54"/>
    </location>
</feature>
<feature type="strand" evidence="10">
    <location>
        <begin position="56"/>
        <end position="58"/>
    </location>
</feature>
<feature type="helix" evidence="12">
    <location>
        <begin position="60"/>
        <end position="79"/>
    </location>
</feature>
<feature type="turn" evidence="12">
    <location>
        <begin position="84"/>
        <end position="87"/>
    </location>
</feature>
<feature type="helix" evidence="12">
    <location>
        <begin position="90"/>
        <end position="99"/>
    </location>
</feature>
<feature type="strand" evidence="10">
    <location>
        <begin position="101"/>
        <end position="103"/>
    </location>
</feature>
<feature type="strand" evidence="12">
    <location>
        <begin position="106"/>
        <end position="108"/>
    </location>
</feature>
<feature type="helix" evidence="12">
    <location>
        <begin position="111"/>
        <end position="115"/>
    </location>
</feature>
<feature type="helix" evidence="12">
    <location>
        <begin position="121"/>
        <end position="128"/>
    </location>
</feature>
<feature type="helix" evidence="12">
    <location>
        <begin position="144"/>
        <end position="153"/>
    </location>
</feature>
<feature type="helix" evidence="12">
    <location>
        <begin position="155"/>
        <end position="169"/>
    </location>
</feature>
<feature type="helix" evidence="12">
    <location>
        <begin position="175"/>
        <end position="192"/>
    </location>
</feature>
<feature type="strand" evidence="12">
    <location>
        <begin position="195"/>
        <end position="197"/>
    </location>
</feature>
<feature type="helix" evidence="12">
    <location>
        <begin position="198"/>
        <end position="230"/>
    </location>
</feature>
<feature type="helix" evidence="12">
    <location>
        <begin position="232"/>
        <end position="246"/>
    </location>
</feature>
<feature type="helix" evidence="12">
    <location>
        <begin position="252"/>
        <end position="270"/>
    </location>
</feature>
<feature type="helix" evidence="12">
    <location>
        <begin position="274"/>
        <end position="290"/>
    </location>
</feature>
<feature type="helix" evidence="12">
    <location>
        <begin position="292"/>
        <end position="294"/>
    </location>
</feature>
<feature type="helix" evidence="12">
    <location>
        <begin position="297"/>
        <end position="299"/>
    </location>
</feature>
<feature type="helix" evidence="12">
    <location>
        <begin position="300"/>
        <end position="303"/>
    </location>
</feature>
<feature type="helix" evidence="12">
    <location>
        <begin position="307"/>
        <end position="315"/>
    </location>
</feature>
<feature type="helix" evidence="12">
    <location>
        <begin position="330"/>
        <end position="333"/>
    </location>
</feature>
<feature type="helix" evidence="12">
    <location>
        <begin position="339"/>
        <end position="345"/>
    </location>
</feature>
<feature type="helix" evidence="12">
    <location>
        <begin position="347"/>
        <end position="360"/>
    </location>
</feature>
<feature type="helix" evidence="12">
    <location>
        <begin position="367"/>
        <end position="384"/>
    </location>
</feature>
<feature type="strand" evidence="9">
    <location>
        <begin position="387"/>
        <end position="389"/>
    </location>
</feature>
<feature type="helix" evidence="12">
    <location>
        <begin position="390"/>
        <end position="394"/>
    </location>
</feature>
<feature type="turn" evidence="12">
    <location>
        <begin position="395"/>
        <end position="398"/>
    </location>
</feature>
<feature type="helix" evidence="12">
    <location>
        <begin position="399"/>
        <end position="401"/>
    </location>
</feature>
<feature type="helix" evidence="12">
    <location>
        <begin position="402"/>
        <end position="406"/>
    </location>
</feature>
<feature type="helix" evidence="12">
    <location>
        <begin position="409"/>
        <end position="438"/>
    </location>
</feature>
<feature type="helix" evidence="12">
    <location>
        <begin position="444"/>
        <end position="461"/>
    </location>
</feature>
<feature type="helix" evidence="12">
    <location>
        <begin position="466"/>
        <end position="490"/>
    </location>
</feature>
<feature type="helix" evidence="12">
    <location>
        <begin position="495"/>
        <end position="503"/>
    </location>
</feature>
<feature type="helix" evidence="11">
    <location>
        <begin position="505"/>
        <end position="507"/>
    </location>
</feature>
<feature type="helix" evidence="12">
    <location>
        <begin position="508"/>
        <end position="513"/>
    </location>
</feature>
<feature type="strand" evidence="10">
    <location>
        <begin position="519"/>
        <end position="521"/>
    </location>
</feature>
<feature type="helix" evidence="10">
    <location>
        <begin position="528"/>
        <end position="530"/>
    </location>
</feature>
<feature type="helix" evidence="12">
    <location>
        <begin position="536"/>
        <end position="539"/>
    </location>
</feature>
<feature type="helix" evidence="12">
    <location>
        <begin position="542"/>
        <end position="559"/>
    </location>
</feature>
<feature type="helix" evidence="12">
    <location>
        <begin position="565"/>
        <end position="582"/>
    </location>
</feature>
<feature type="strand" evidence="12">
    <location>
        <begin position="584"/>
        <end position="586"/>
    </location>
</feature>
<feature type="turn" evidence="12">
    <location>
        <begin position="591"/>
        <end position="595"/>
    </location>
</feature>
<feature type="helix" evidence="12">
    <location>
        <begin position="596"/>
        <end position="606"/>
    </location>
</feature>
<gene>
    <name type="primary">ALB</name>
</gene>
<evidence type="ECO:0000250" key="1">
    <source>
        <dbReference type="UniProtKB" id="P02768"/>
    </source>
</evidence>
<evidence type="ECO:0000250" key="2">
    <source>
        <dbReference type="UniProtKB" id="P02769"/>
    </source>
</evidence>
<evidence type="ECO:0000250" key="3">
    <source>
        <dbReference type="UniProtKB" id="P02770"/>
    </source>
</evidence>
<evidence type="ECO:0000250" key="4">
    <source>
        <dbReference type="UniProtKB" id="P07724"/>
    </source>
</evidence>
<evidence type="ECO:0000255" key="5"/>
<evidence type="ECO:0000255" key="6">
    <source>
        <dbReference type="PROSITE-ProRule" id="PRU00769"/>
    </source>
</evidence>
<evidence type="ECO:0000269" key="7">
    <source>
    </source>
</evidence>
<evidence type="ECO:0007744" key="8">
    <source>
        <dbReference type="PDB" id="3V09"/>
    </source>
</evidence>
<evidence type="ECO:0007829" key="9">
    <source>
        <dbReference type="PDB" id="3V09"/>
    </source>
</evidence>
<evidence type="ECO:0007829" key="10">
    <source>
        <dbReference type="PDB" id="6OCK"/>
    </source>
</evidence>
<evidence type="ECO:0007829" key="11">
    <source>
        <dbReference type="PDB" id="6OCL"/>
    </source>
</evidence>
<evidence type="ECO:0007829" key="12">
    <source>
        <dbReference type="PDB" id="8BSG"/>
    </source>
</evidence>
<name>ALBU_RABIT</name>
<organism>
    <name type="scientific">Oryctolagus cuniculus</name>
    <name type="common">Rabbit</name>
    <dbReference type="NCBI Taxonomy" id="9986"/>
    <lineage>
        <taxon>Eukaryota</taxon>
        <taxon>Metazoa</taxon>
        <taxon>Chordata</taxon>
        <taxon>Craniata</taxon>
        <taxon>Vertebrata</taxon>
        <taxon>Euteleostomi</taxon>
        <taxon>Mammalia</taxon>
        <taxon>Eutheria</taxon>
        <taxon>Euarchontoglires</taxon>
        <taxon>Glires</taxon>
        <taxon>Lagomorpha</taxon>
        <taxon>Leporidae</taxon>
        <taxon>Oryctolagus</taxon>
    </lineage>
</organism>